<keyword id="KW-0067">ATP-binding</keyword>
<keyword id="KW-0963">Cytoplasm</keyword>
<keyword id="KW-0275">Fatty acid biosynthesis</keyword>
<keyword id="KW-0276">Fatty acid metabolism</keyword>
<keyword id="KW-0444">Lipid biosynthesis</keyword>
<keyword id="KW-0443">Lipid metabolism</keyword>
<keyword id="KW-0479">Metal-binding</keyword>
<keyword id="KW-0547">Nucleotide-binding</keyword>
<keyword id="KW-0808">Transferase</keyword>
<keyword id="KW-0862">Zinc</keyword>
<keyword id="KW-0863">Zinc-finger</keyword>
<dbReference type="EC" id="2.1.3.15" evidence="1"/>
<dbReference type="EMBL" id="AE015929">
    <property type="protein sequence ID" value="AAO04975.1"/>
    <property type="molecule type" value="Genomic_DNA"/>
</dbReference>
<dbReference type="RefSeq" id="NP_764931.1">
    <property type="nucleotide sequence ID" value="NC_004461.1"/>
</dbReference>
<dbReference type="RefSeq" id="WP_001832673.1">
    <property type="nucleotide sequence ID" value="NZ_WBME01000042.1"/>
</dbReference>
<dbReference type="SMR" id="Q8CS66"/>
<dbReference type="KEGG" id="sep:SE_1376"/>
<dbReference type="PATRIC" id="fig|176280.10.peg.1344"/>
<dbReference type="eggNOG" id="COG0777">
    <property type="taxonomic scope" value="Bacteria"/>
</dbReference>
<dbReference type="HOGENOM" id="CLU_015486_1_0_9"/>
<dbReference type="OrthoDB" id="9772975at2"/>
<dbReference type="UniPathway" id="UPA00655">
    <property type="reaction ID" value="UER00711"/>
</dbReference>
<dbReference type="Proteomes" id="UP000001411">
    <property type="component" value="Chromosome"/>
</dbReference>
<dbReference type="GO" id="GO:0009317">
    <property type="term" value="C:acetyl-CoA carboxylase complex"/>
    <property type="evidence" value="ECO:0007669"/>
    <property type="project" value="InterPro"/>
</dbReference>
<dbReference type="GO" id="GO:0003989">
    <property type="term" value="F:acetyl-CoA carboxylase activity"/>
    <property type="evidence" value="ECO:0007669"/>
    <property type="project" value="InterPro"/>
</dbReference>
<dbReference type="GO" id="GO:0005524">
    <property type="term" value="F:ATP binding"/>
    <property type="evidence" value="ECO:0007669"/>
    <property type="project" value="UniProtKB-KW"/>
</dbReference>
<dbReference type="GO" id="GO:0016743">
    <property type="term" value="F:carboxyl- or carbamoyltransferase activity"/>
    <property type="evidence" value="ECO:0007669"/>
    <property type="project" value="UniProtKB-UniRule"/>
</dbReference>
<dbReference type="GO" id="GO:0008270">
    <property type="term" value="F:zinc ion binding"/>
    <property type="evidence" value="ECO:0007669"/>
    <property type="project" value="UniProtKB-UniRule"/>
</dbReference>
<dbReference type="GO" id="GO:0006633">
    <property type="term" value="P:fatty acid biosynthetic process"/>
    <property type="evidence" value="ECO:0007669"/>
    <property type="project" value="UniProtKB-KW"/>
</dbReference>
<dbReference type="GO" id="GO:2001295">
    <property type="term" value="P:malonyl-CoA biosynthetic process"/>
    <property type="evidence" value="ECO:0007669"/>
    <property type="project" value="UniProtKB-UniRule"/>
</dbReference>
<dbReference type="Gene3D" id="3.90.226.10">
    <property type="entry name" value="2-enoyl-CoA Hydratase, Chain A, domain 1"/>
    <property type="match status" value="1"/>
</dbReference>
<dbReference type="HAMAP" id="MF_01395">
    <property type="entry name" value="AcetylCoA_CT_beta"/>
    <property type="match status" value="1"/>
</dbReference>
<dbReference type="InterPro" id="IPR034733">
    <property type="entry name" value="AcCoA_carboxyl_beta"/>
</dbReference>
<dbReference type="InterPro" id="IPR000438">
    <property type="entry name" value="Acetyl_CoA_COase_Trfase_b_su"/>
</dbReference>
<dbReference type="InterPro" id="IPR029045">
    <property type="entry name" value="ClpP/crotonase-like_dom_sf"/>
</dbReference>
<dbReference type="InterPro" id="IPR011762">
    <property type="entry name" value="COA_CT_N"/>
</dbReference>
<dbReference type="InterPro" id="IPR041010">
    <property type="entry name" value="Znf-ACC"/>
</dbReference>
<dbReference type="NCBIfam" id="TIGR00515">
    <property type="entry name" value="accD"/>
    <property type="match status" value="1"/>
</dbReference>
<dbReference type="PANTHER" id="PTHR42995">
    <property type="entry name" value="ACETYL-COENZYME A CARBOXYLASE CARBOXYL TRANSFERASE SUBUNIT BETA, CHLOROPLASTIC"/>
    <property type="match status" value="1"/>
</dbReference>
<dbReference type="PANTHER" id="PTHR42995:SF5">
    <property type="entry name" value="ACETYL-COENZYME A CARBOXYLASE CARBOXYL TRANSFERASE SUBUNIT BETA, CHLOROPLASTIC"/>
    <property type="match status" value="1"/>
</dbReference>
<dbReference type="Pfam" id="PF01039">
    <property type="entry name" value="Carboxyl_trans"/>
    <property type="match status" value="1"/>
</dbReference>
<dbReference type="Pfam" id="PF17848">
    <property type="entry name" value="Zn_ribbon_ACC"/>
    <property type="match status" value="1"/>
</dbReference>
<dbReference type="PRINTS" id="PR01070">
    <property type="entry name" value="ACCCTRFRASEB"/>
</dbReference>
<dbReference type="SUPFAM" id="SSF52096">
    <property type="entry name" value="ClpP/crotonase"/>
    <property type="match status" value="1"/>
</dbReference>
<dbReference type="PROSITE" id="PS50980">
    <property type="entry name" value="COA_CT_NTER"/>
    <property type="match status" value="1"/>
</dbReference>
<protein>
    <recommendedName>
        <fullName evidence="1">Acetyl-coenzyme A carboxylase carboxyl transferase subunit beta</fullName>
        <shortName evidence="1">ACCase subunit beta</shortName>
        <shortName evidence="1">Acetyl-CoA carboxylase carboxyltransferase subunit beta</shortName>
        <ecNumber evidence="1">2.1.3.15</ecNumber>
    </recommendedName>
</protein>
<accession>Q8CS66</accession>
<sequence length="285" mass="31881">MFKDFFNRSKKKKYLTVQDSKQNDVPAGIMTKCPKCKKIMYTKELNENLNVCFNCDHHIALTAYKRIEAISDEGSFIEFDRGMTSANPLDFPGYEEKIEKDQQKTGLNEALVSGTAKLDGIQYGVAVMDARFRMGSMGSVVGEKICRIIDYCTEHRLPFILFSASGGARMQEGIISLMQMGKTSVSLKRHSDAGLLYISYITNPTTGGVSASFASVGDINLSEPKALIGFAGRRVIEQTINEKLPDDFQTAEFLLEHGQLDKVIHRKDMRETLSNILKIHQEVSN</sequence>
<gene>
    <name evidence="1" type="primary">accD</name>
    <name type="ordered locus">SE_1376</name>
</gene>
<name>ACCD_STAES</name>
<proteinExistence type="inferred from homology"/>
<reference key="1">
    <citation type="journal article" date="2003" name="Mol. Microbiol.">
        <title>Genome-based analysis of virulence genes in a non-biofilm-forming Staphylococcus epidermidis strain (ATCC 12228).</title>
        <authorList>
            <person name="Zhang Y.-Q."/>
            <person name="Ren S.-X."/>
            <person name="Li H.-L."/>
            <person name="Wang Y.-X."/>
            <person name="Fu G."/>
            <person name="Yang J."/>
            <person name="Qin Z.-Q."/>
            <person name="Miao Y.-G."/>
            <person name="Wang W.-Y."/>
            <person name="Chen R.-S."/>
            <person name="Shen Y."/>
            <person name="Chen Z."/>
            <person name="Yuan Z.-H."/>
            <person name="Zhao G.-P."/>
            <person name="Qu D."/>
            <person name="Danchin A."/>
            <person name="Wen Y.-M."/>
        </authorList>
    </citation>
    <scope>NUCLEOTIDE SEQUENCE [LARGE SCALE GENOMIC DNA]</scope>
    <source>
        <strain>ATCC 12228 / FDA PCI 1200</strain>
    </source>
</reference>
<evidence type="ECO:0000255" key="1">
    <source>
        <dbReference type="HAMAP-Rule" id="MF_01395"/>
    </source>
</evidence>
<evidence type="ECO:0000255" key="2">
    <source>
        <dbReference type="PROSITE-ProRule" id="PRU01136"/>
    </source>
</evidence>
<organism>
    <name type="scientific">Staphylococcus epidermidis (strain ATCC 12228 / FDA PCI 1200)</name>
    <dbReference type="NCBI Taxonomy" id="176280"/>
    <lineage>
        <taxon>Bacteria</taxon>
        <taxon>Bacillati</taxon>
        <taxon>Bacillota</taxon>
        <taxon>Bacilli</taxon>
        <taxon>Bacillales</taxon>
        <taxon>Staphylococcaceae</taxon>
        <taxon>Staphylococcus</taxon>
    </lineage>
</organism>
<comment type="function">
    <text evidence="1">Component of the acetyl coenzyme A carboxylase (ACC) complex. Biotin carboxylase (BC) catalyzes the carboxylation of biotin on its carrier protein (BCCP) and then the CO(2) group is transferred by the transcarboxylase to acetyl-CoA to form malonyl-CoA.</text>
</comment>
<comment type="catalytic activity">
    <reaction evidence="1">
        <text>N(6)-carboxybiotinyl-L-lysyl-[protein] + acetyl-CoA = N(6)-biotinyl-L-lysyl-[protein] + malonyl-CoA</text>
        <dbReference type="Rhea" id="RHEA:54728"/>
        <dbReference type="Rhea" id="RHEA-COMP:10505"/>
        <dbReference type="Rhea" id="RHEA-COMP:10506"/>
        <dbReference type="ChEBI" id="CHEBI:57288"/>
        <dbReference type="ChEBI" id="CHEBI:57384"/>
        <dbReference type="ChEBI" id="CHEBI:83144"/>
        <dbReference type="ChEBI" id="CHEBI:83145"/>
        <dbReference type="EC" id="2.1.3.15"/>
    </reaction>
</comment>
<comment type="cofactor">
    <cofactor evidence="1">
        <name>Zn(2+)</name>
        <dbReference type="ChEBI" id="CHEBI:29105"/>
    </cofactor>
    <text evidence="1">Binds 1 zinc ion per subunit.</text>
</comment>
<comment type="pathway">
    <text evidence="1">Lipid metabolism; malonyl-CoA biosynthesis; malonyl-CoA from acetyl-CoA: step 1/1.</text>
</comment>
<comment type="subunit">
    <text evidence="1">Acetyl-CoA carboxylase is a heterohexamer composed of biotin carboxyl carrier protein (AccB), biotin carboxylase (AccC) and two subunits each of ACCase subunit alpha (AccA) and ACCase subunit beta (AccD).</text>
</comment>
<comment type="subcellular location">
    <subcellularLocation>
        <location evidence="1">Cytoplasm</location>
    </subcellularLocation>
</comment>
<comment type="similarity">
    <text evidence="1">Belongs to the AccD/PCCB family.</text>
</comment>
<feature type="chain" id="PRO_0000389862" description="Acetyl-coenzyme A carboxylase carboxyl transferase subunit beta">
    <location>
        <begin position="1"/>
        <end position="285"/>
    </location>
</feature>
<feature type="domain" description="CoA carboxyltransferase N-terminal" evidence="2">
    <location>
        <begin position="29"/>
        <end position="285"/>
    </location>
</feature>
<feature type="zinc finger region" description="C4-type" evidence="1">
    <location>
        <begin position="33"/>
        <end position="55"/>
    </location>
</feature>
<feature type="binding site" evidence="1">
    <location>
        <position position="33"/>
    </location>
    <ligand>
        <name>Zn(2+)</name>
        <dbReference type="ChEBI" id="CHEBI:29105"/>
    </ligand>
</feature>
<feature type="binding site" evidence="1">
    <location>
        <position position="36"/>
    </location>
    <ligand>
        <name>Zn(2+)</name>
        <dbReference type="ChEBI" id="CHEBI:29105"/>
    </ligand>
</feature>
<feature type="binding site" evidence="1">
    <location>
        <position position="52"/>
    </location>
    <ligand>
        <name>Zn(2+)</name>
        <dbReference type="ChEBI" id="CHEBI:29105"/>
    </ligand>
</feature>
<feature type="binding site" evidence="1">
    <location>
        <position position="55"/>
    </location>
    <ligand>
        <name>Zn(2+)</name>
        <dbReference type="ChEBI" id="CHEBI:29105"/>
    </ligand>
</feature>